<sequence>MRSSVQPLINEIRQQFLHDLEQVQTTLELEQLKIKFLGKKGSLQGLMKELKNVEPDQRPLVGKFINELKEFMSNHCDELEHQLIAKEENAQLAHETIDVTLPGRQRFVGRKHPLTQAMDQIIHILSKMGFSVQYGPDIDTDYYNFEILNFPPEHPARDMQDTFYISPHVLLRTHTSNIQARAMELNRPPIRIIAPGKVYRNETITARSHVFFHQVEAVYIDQHVSFADLFATMDEFLKKLFKQTIETRYRPSYFPFVEPGLEVDISCLVCEGKGCQLCKHTGWVEVAGAGMIHPEVLKNGGIDPEHYSGFAWGMGLERLVMMLRGIQDIRLFTENDLRFLQQFTLL</sequence>
<gene>
    <name evidence="1" type="primary">pheS</name>
    <name type="ordered locus">pc0705</name>
</gene>
<name>SYFA_PARUW</name>
<feature type="chain" id="PRO_0000232004" description="Phenylalanine--tRNA ligase alpha subunit">
    <location>
        <begin position="1"/>
        <end position="346"/>
    </location>
</feature>
<feature type="binding site" evidence="1">
    <location>
        <position position="258"/>
    </location>
    <ligand>
        <name>Mg(2+)</name>
        <dbReference type="ChEBI" id="CHEBI:18420"/>
        <note>shared with beta subunit</note>
    </ligand>
</feature>
<organism>
    <name type="scientific">Protochlamydia amoebophila (strain UWE25)</name>
    <dbReference type="NCBI Taxonomy" id="264201"/>
    <lineage>
        <taxon>Bacteria</taxon>
        <taxon>Pseudomonadati</taxon>
        <taxon>Chlamydiota</taxon>
        <taxon>Chlamydiia</taxon>
        <taxon>Parachlamydiales</taxon>
        <taxon>Parachlamydiaceae</taxon>
        <taxon>Candidatus Protochlamydia</taxon>
    </lineage>
</organism>
<proteinExistence type="inferred from homology"/>
<evidence type="ECO:0000255" key="1">
    <source>
        <dbReference type="HAMAP-Rule" id="MF_00281"/>
    </source>
</evidence>
<keyword id="KW-0030">Aminoacyl-tRNA synthetase</keyword>
<keyword id="KW-0067">ATP-binding</keyword>
<keyword id="KW-0963">Cytoplasm</keyword>
<keyword id="KW-0436">Ligase</keyword>
<keyword id="KW-0460">Magnesium</keyword>
<keyword id="KW-0479">Metal-binding</keyword>
<keyword id="KW-0547">Nucleotide-binding</keyword>
<keyword id="KW-0648">Protein biosynthesis</keyword>
<keyword id="KW-1185">Reference proteome</keyword>
<accession>Q6MDC0</accession>
<dbReference type="EC" id="6.1.1.20" evidence="1"/>
<dbReference type="EMBL" id="BX908798">
    <property type="protein sequence ID" value="CAF23429.1"/>
    <property type="molecule type" value="Genomic_DNA"/>
</dbReference>
<dbReference type="SMR" id="Q6MDC0"/>
<dbReference type="STRING" id="264201.pc0705"/>
<dbReference type="KEGG" id="pcu:PC_RS03390"/>
<dbReference type="eggNOG" id="COG0016">
    <property type="taxonomic scope" value="Bacteria"/>
</dbReference>
<dbReference type="HOGENOM" id="CLU_025086_0_1_0"/>
<dbReference type="OrthoDB" id="9800719at2"/>
<dbReference type="Proteomes" id="UP000000529">
    <property type="component" value="Chromosome"/>
</dbReference>
<dbReference type="GO" id="GO:0005737">
    <property type="term" value="C:cytoplasm"/>
    <property type="evidence" value="ECO:0007669"/>
    <property type="project" value="UniProtKB-SubCell"/>
</dbReference>
<dbReference type="GO" id="GO:0005524">
    <property type="term" value="F:ATP binding"/>
    <property type="evidence" value="ECO:0007669"/>
    <property type="project" value="UniProtKB-UniRule"/>
</dbReference>
<dbReference type="GO" id="GO:0000287">
    <property type="term" value="F:magnesium ion binding"/>
    <property type="evidence" value="ECO:0007669"/>
    <property type="project" value="UniProtKB-UniRule"/>
</dbReference>
<dbReference type="GO" id="GO:0004826">
    <property type="term" value="F:phenylalanine-tRNA ligase activity"/>
    <property type="evidence" value="ECO:0007669"/>
    <property type="project" value="UniProtKB-UniRule"/>
</dbReference>
<dbReference type="GO" id="GO:0000049">
    <property type="term" value="F:tRNA binding"/>
    <property type="evidence" value="ECO:0007669"/>
    <property type="project" value="InterPro"/>
</dbReference>
<dbReference type="GO" id="GO:0006432">
    <property type="term" value="P:phenylalanyl-tRNA aminoacylation"/>
    <property type="evidence" value="ECO:0007669"/>
    <property type="project" value="UniProtKB-UniRule"/>
</dbReference>
<dbReference type="CDD" id="cd00496">
    <property type="entry name" value="PheRS_alpha_core"/>
    <property type="match status" value="1"/>
</dbReference>
<dbReference type="FunFam" id="3.30.930.10:FF:000003">
    <property type="entry name" value="Phenylalanine--tRNA ligase alpha subunit"/>
    <property type="match status" value="1"/>
</dbReference>
<dbReference type="Gene3D" id="3.30.930.10">
    <property type="entry name" value="Bira Bifunctional Protein, Domain 2"/>
    <property type="match status" value="1"/>
</dbReference>
<dbReference type="HAMAP" id="MF_00281">
    <property type="entry name" value="Phe_tRNA_synth_alpha1"/>
    <property type="match status" value="1"/>
</dbReference>
<dbReference type="InterPro" id="IPR006195">
    <property type="entry name" value="aa-tRNA-synth_II"/>
</dbReference>
<dbReference type="InterPro" id="IPR045864">
    <property type="entry name" value="aa-tRNA-synth_II/BPL/LPL"/>
</dbReference>
<dbReference type="InterPro" id="IPR004529">
    <property type="entry name" value="Phe-tRNA-synth_IIc_asu"/>
</dbReference>
<dbReference type="InterPro" id="IPR004188">
    <property type="entry name" value="Phe-tRNA_ligase_II_N"/>
</dbReference>
<dbReference type="InterPro" id="IPR022911">
    <property type="entry name" value="Phe_tRNA_ligase_alpha1_bac"/>
</dbReference>
<dbReference type="InterPro" id="IPR002319">
    <property type="entry name" value="Phenylalanyl-tRNA_Synthase"/>
</dbReference>
<dbReference type="InterPro" id="IPR010978">
    <property type="entry name" value="tRNA-bd_arm"/>
</dbReference>
<dbReference type="NCBIfam" id="TIGR00468">
    <property type="entry name" value="pheS"/>
    <property type="match status" value="1"/>
</dbReference>
<dbReference type="PANTHER" id="PTHR11538:SF41">
    <property type="entry name" value="PHENYLALANINE--TRNA LIGASE, MITOCHONDRIAL"/>
    <property type="match status" value="1"/>
</dbReference>
<dbReference type="PANTHER" id="PTHR11538">
    <property type="entry name" value="PHENYLALANYL-TRNA SYNTHETASE"/>
    <property type="match status" value="1"/>
</dbReference>
<dbReference type="Pfam" id="PF02912">
    <property type="entry name" value="Phe_tRNA-synt_N"/>
    <property type="match status" value="1"/>
</dbReference>
<dbReference type="Pfam" id="PF01409">
    <property type="entry name" value="tRNA-synt_2d"/>
    <property type="match status" value="1"/>
</dbReference>
<dbReference type="SUPFAM" id="SSF55681">
    <property type="entry name" value="Class II aaRS and biotin synthetases"/>
    <property type="match status" value="1"/>
</dbReference>
<dbReference type="SUPFAM" id="SSF46589">
    <property type="entry name" value="tRNA-binding arm"/>
    <property type="match status" value="1"/>
</dbReference>
<dbReference type="PROSITE" id="PS50862">
    <property type="entry name" value="AA_TRNA_LIGASE_II"/>
    <property type="match status" value="1"/>
</dbReference>
<reference key="1">
    <citation type="journal article" date="2004" name="Science">
        <title>Illuminating the evolutionary history of chlamydiae.</title>
        <authorList>
            <person name="Horn M."/>
            <person name="Collingro A."/>
            <person name="Schmitz-Esser S."/>
            <person name="Beier C.L."/>
            <person name="Purkhold U."/>
            <person name="Fartmann B."/>
            <person name="Brandt P."/>
            <person name="Nyakatura G.J."/>
            <person name="Droege M."/>
            <person name="Frishman D."/>
            <person name="Rattei T."/>
            <person name="Mewes H.-W."/>
            <person name="Wagner M."/>
        </authorList>
    </citation>
    <scope>NUCLEOTIDE SEQUENCE [LARGE SCALE GENOMIC DNA]</scope>
    <source>
        <strain>UWE25</strain>
    </source>
</reference>
<comment type="catalytic activity">
    <reaction evidence="1">
        <text>tRNA(Phe) + L-phenylalanine + ATP = L-phenylalanyl-tRNA(Phe) + AMP + diphosphate + H(+)</text>
        <dbReference type="Rhea" id="RHEA:19413"/>
        <dbReference type="Rhea" id="RHEA-COMP:9668"/>
        <dbReference type="Rhea" id="RHEA-COMP:9699"/>
        <dbReference type="ChEBI" id="CHEBI:15378"/>
        <dbReference type="ChEBI" id="CHEBI:30616"/>
        <dbReference type="ChEBI" id="CHEBI:33019"/>
        <dbReference type="ChEBI" id="CHEBI:58095"/>
        <dbReference type="ChEBI" id="CHEBI:78442"/>
        <dbReference type="ChEBI" id="CHEBI:78531"/>
        <dbReference type="ChEBI" id="CHEBI:456215"/>
        <dbReference type="EC" id="6.1.1.20"/>
    </reaction>
</comment>
<comment type="cofactor">
    <cofactor evidence="1">
        <name>Mg(2+)</name>
        <dbReference type="ChEBI" id="CHEBI:18420"/>
    </cofactor>
    <text evidence="1">Binds 2 magnesium ions per tetramer.</text>
</comment>
<comment type="subunit">
    <text evidence="1">Tetramer of two alpha and two beta subunits.</text>
</comment>
<comment type="subcellular location">
    <subcellularLocation>
        <location evidence="1">Cytoplasm</location>
    </subcellularLocation>
</comment>
<comment type="similarity">
    <text evidence="1">Belongs to the class-II aminoacyl-tRNA synthetase family. Phe-tRNA synthetase alpha subunit type 1 subfamily.</text>
</comment>
<protein>
    <recommendedName>
        <fullName evidence="1">Phenylalanine--tRNA ligase alpha subunit</fullName>
        <ecNumber evidence="1">6.1.1.20</ecNumber>
    </recommendedName>
    <alternativeName>
        <fullName evidence="1">Phenylalanyl-tRNA synthetase alpha subunit</fullName>
        <shortName evidence="1">PheRS</shortName>
    </alternativeName>
</protein>